<accession>A1JTY5</accession>
<feature type="chain" id="PRO_1000069552" description="NAD-dependent malic enzyme">
    <location>
        <begin position="1"/>
        <end position="565"/>
    </location>
</feature>
<feature type="active site" description="Proton donor" evidence="1">
    <location>
        <position position="104"/>
    </location>
</feature>
<feature type="active site" description="Proton acceptor" evidence="1">
    <location>
        <position position="175"/>
    </location>
</feature>
<feature type="binding site" evidence="1">
    <location>
        <position position="157"/>
    </location>
    <ligand>
        <name>NAD(+)</name>
        <dbReference type="ChEBI" id="CHEBI:57540"/>
    </ligand>
</feature>
<feature type="binding site" evidence="1">
    <location>
        <position position="246"/>
    </location>
    <ligand>
        <name>a divalent metal cation</name>
        <dbReference type="ChEBI" id="CHEBI:60240"/>
    </ligand>
</feature>
<feature type="binding site" evidence="1">
    <location>
        <position position="247"/>
    </location>
    <ligand>
        <name>a divalent metal cation</name>
        <dbReference type="ChEBI" id="CHEBI:60240"/>
    </ligand>
</feature>
<feature type="binding site" evidence="1">
    <location>
        <position position="270"/>
    </location>
    <ligand>
        <name>a divalent metal cation</name>
        <dbReference type="ChEBI" id="CHEBI:60240"/>
    </ligand>
</feature>
<feature type="binding site" evidence="1">
    <location>
        <position position="270"/>
    </location>
    <ligand>
        <name>NAD(+)</name>
        <dbReference type="ChEBI" id="CHEBI:57540"/>
    </ligand>
</feature>
<feature type="binding site" evidence="1">
    <location>
        <position position="418"/>
    </location>
    <ligand>
        <name>NAD(+)</name>
        <dbReference type="ChEBI" id="CHEBI:57540"/>
    </ligand>
</feature>
<feature type="site" description="Important for activity" evidence="1">
    <location>
        <position position="270"/>
    </location>
</feature>
<reference key="1">
    <citation type="journal article" date="2006" name="PLoS Genet.">
        <title>The complete genome sequence and comparative genome analysis of the high pathogenicity Yersinia enterocolitica strain 8081.</title>
        <authorList>
            <person name="Thomson N.R."/>
            <person name="Howard S."/>
            <person name="Wren B.W."/>
            <person name="Holden M.T.G."/>
            <person name="Crossman L."/>
            <person name="Challis G.L."/>
            <person name="Churcher C."/>
            <person name="Mungall K."/>
            <person name="Brooks K."/>
            <person name="Chillingworth T."/>
            <person name="Feltwell T."/>
            <person name="Abdellah Z."/>
            <person name="Hauser H."/>
            <person name="Jagels K."/>
            <person name="Maddison M."/>
            <person name="Moule S."/>
            <person name="Sanders M."/>
            <person name="Whitehead S."/>
            <person name="Quail M.A."/>
            <person name="Dougan G."/>
            <person name="Parkhill J."/>
            <person name="Prentice M.B."/>
        </authorList>
    </citation>
    <scope>NUCLEOTIDE SEQUENCE [LARGE SCALE GENOMIC DNA]</scope>
    <source>
        <strain>NCTC 13174 / 8081</strain>
    </source>
</reference>
<name>MAO1_YERE8</name>
<proteinExistence type="inferred from homology"/>
<sequence length="565" mass="62672">MELEYESKRPLYIPYAGPILLEFPLLNKGSAFTNDERSHFNLHGLLPEAVETIEEQAERAYRQYQDFKNDDDKHIYLRNIQDTNETLFYRLLEAHLSEMMPIIYTPTVGEACEHFSDIYRRARGLFISYPNREHIDDMLQNATKQNVKVIVVTDGERILGLGDQGIGGMGIPIGKLSLYTACGGISPAYTLPVVLDVGTNNPQRLNDPLYMGWRHPRISGDEYYAFVDEFIQAVKRRWPNVLLQFEDFAQNNATPLLNRYRDELCCFNDDIQGTAAVTLGSLIAASHAAGSQLRDQTVTFLGAGSAGCGIAEQIIAQMISEGLSEEQARARVFMVDRFGLLTDKLPNLLDFQSKLVQKSDALQSWNLTSDSISLQDVVRNAKPTVLIGVSGQPGLFTEELIREMHKHCARPIVMPLSNPTSRVEARPEDIINWTDGAALVATGSPFSPVSYKEKLYPIAQCNNSYIFPGIGLGVLASGAKRVTDGMLMAASRALAQCSPLAQNGEGALLPNIDDIQAVSKTIAMQVGKAAQLQGVAIVTSEEALAKAIEHNYWQPQYRTYKRTSF</sequence>
<comment type="catalytic activity">
    <reaction evidence="1">
        <text>(S)-malate + NAD(+) = pyruvate + CO2 + NADH</text>
        <dbReference type="Rhea" id="RHEA:12653"/>
        <dbReference type="ChEBI" id="CHEBI:15361"/>
        <dbReference type="ChEBI" id="CHEBI:15589"/>
        <dbReference type="ChEBI" id="CHEBI:16526"/>
        <dbReference type="ChEBI" id="CHEBI:57540"/>
        <dbReference type="ChEBI" id="CHEBI:57945"/>
        <dbReference type="EC" id="1.1.1.38"/>
    </reaction>
</comment>
<comment type="catalytic activity">
    <reaction evidence="1">
        <text>oxaloacetate + H(+) = pyruvate + CO2</text>
        <dbReference type="Rhea" id="RHEA:15641"/>
        <dbReference type="ChEBI" id="CHEBI:15361"/>
        <dbReference type="ChEBI" id="CHEBI:15378"/>
        <dbReference type="ChEBI" id="CHEBI:16452"/>
        <dbReference type="ChEBI" id="CHEBI:16526"/>
        <dbReference type="EC" id="1.1.1.38"/>
    </reaction>
</comment>
<comment type="cofactor">
    <cofactor evidence="1">
        <name>Mg(2+)</name>
        <dbReference type="ChEBI" id="CHEBI:18420"/>
    </cofactor>
    <cofactor evidence="1">
        <name>Mn(2+)</name>
        <dbReference type="ChEBI" id="CHEBI:29035"/>
    </cofactor>
    <text evidence="1">Divalent metal cations. Prefers magnesium or manganese.</text>
</comment>
<comment type="subunit">
    <text evidence="1">Homotetramer.</text>
</comment>
<comment type="similarity">
    <text evidence="1">Belongs to the malic enzymes family.</text>
</comment>
<evidence type="ECO:0000255" key="1">
    <source>
        <dbReference type="HAMAP-Rule" id="MF_01619"/>
    </source>
</evidence>
<gene>
    <name evidence="1" type="primary">maeA</name>
    <name type="ordered locus">YE2794</name>
</gene>
<keyword id="KW-0479">Metal-binding</keyword>
<keyword id="KW-0520">NAD</keyword>
<keyword id="KW-0560">Oxidoreductase</keyword>
<protein>
    <recommendedName>
        <fullName evidence="1">NAD-dependent malic enzyme</fullName>
        <shortName evidence="1">NAD-ME</shortName>
        <ecNumber evidence="1">1.1.1.38</ecNumber>
    </recommendedName>
</protein>
<organism>
    <name type="scientific">Yersinia enterocolitica serotype O:8 / biotype 1B (strain NCTC 13174 / 8081)</name>
    <dbReference type="NCBI Taxonomy" id="393305"/>
    <lineage>
        <taxon>Bacteria</taxon>
        <taxon>Pseudomonadati</taxon>
        <taxon>Pseudomonadota</taxon>
        <taxon>Gammaproteobacteria</taxon>
        <taxon>Enterobacterales</taxon>
        <taxon>Yersiniaceae</taxon>
        <taxon>Yersinia</taxon>
    </lineage>
</organism>
<dbReference type="EC" id="1.1.1.38" evidence="1"/>
<dbReference type="EMBL" id="AM286415">
    <property type="protein sequence ID" value="CAL12827.1"/>
    <property type="molecule type" value="Genomic_DNA"/>
</dbReference>
<dbReference type="RefSeq" id="WP_005168296.1">
    <property type="nucleotide sequence ID" value="NC_008800.1"/>
</dbReference>
<dbReference type="RefSeq" id="YP_001006984.1">
    <property type="nucleotide sequence ID" value="NC_008800.1"/>
</dbReference>
<dbReference type="SMR" id="A1JTY5"/>
<dbReference type="KEGG" id="yen:YE2794"/>
<dbReference type="PATRIC" id="fig|393305.7.peg.2968"/>
<dbReference type="eggNOG" id="COG0281">
    <property type="taxonomic scope" value="Bacteria"/>
</dbReference>
<dbReference type="HOGENOM" id="CLU_011405_5_2_6"/>
<dbReference type="OrthoDB" id="3314528at2"/>
<dbReference type="Proteomes" id="UP000000642">
    <property type="component" value="Chromosome"/>
</dbReference>
<dbReference type="GO" id="GO:0005829">
    <property type="term" value="C:cytosol"/>
    <property type="evidence" value="ECO:0007669"/>
    <property type="project" value="TreeGrafter"/>
</dbReference>
<dbReference type="GO" id="GO:0004471">
    <property type="term" value="F:malate dehydrogenase (decarboxylating) (NAD+) activity"/>
    <property type="evidence" value="ECO:0007669"/>
    <property type="project" value="UniProtKB-UniRule"/>
</dbReference>
<dbReference type="GO" id="GO:0046872">
    <property type="term" value="F:metal ion binding"/>
    <property type="evidence" value="ECO:0007669"/>
    <property type="project" value="UniProtKB-KW"/>
</dbReference>
<dbReference type="GO" id="GO:0051287">
    <property type="term" value="F:NAD binding"/>
    <property type="evidence" value="ECO:0007669"/>
    <property type="project" value="InterPro"/>
</dbReference>
<dbReference type="GO" id="GO:0008948">
    <property type="term" value="F:oxaloacetate decarboxylase activity"/>
    <property type="evidence" value="ECO:0007669"/>
    <property type="project" value="UniProtKB-UniRule"/>
</dbReference>
<dbReference type="GO" id="GO:0006108">
    <property type="term" value="P:malate metabolic process"/>
    <property type="evidence" value="ECO:0007669"/>
    <property type="project" value="TreeGrafter"/>
</dbReference>
<dbReference type="CDD" id="cd05312">
    <property type="entry name" value="NAD_bind_1_malic_enz"/>
    <property type="match status" value="1"/>
</dbReference>
<dbReference type="FunFam" id="3.40.50.10380:FF:000001">
    <property type="entry name" value="NAD-dependent malic enzyme"/>
    <property type="match status" value="1"/>
</dbReference>
<dbReference type="FunFam" id="3.40.50.720:FF:000055">
    <property type="entry name" value="NAD-dependent malic enzyme"/>
    <property type="match status" value="1"/>
</dbReference>
<dbReference type="Gene3D" id="3.40.50.10380">
    <property type="entry name" value="Malic enzyme, N-terminal domain"/>
    <property type="match status" value="1"/>
</dbReference>
<dbReference type="Gene3D" id="3.40.50.720">
    <property type="entry name" value="NAD(P)-binding Rossmann-like Domain"/>
    <property type="match status" value="1"/>
</dbReference>
<dbReference type="HAMAP" id="MF_01619">
    <property type="entry name" value="NAD_malic_enz"/>
    <property type="match status" value="1"/>
</dbReference>
<dbReference type="InterPro" id="IPR046346">
    <property type="entry name" value="Aminoacid_DH-like_N_sf"/>
</dbReference>
<dbReference type="InterPro" id="IPR015884">
    <property type="entry name" value="Malic_enzyme_CS"/>
</dbReference>
<dbReference type="InterPro" id="IPR012301">
    <property type="entry name" value="Malic_N_dom"/>
</dbReference>
<dbReference type="InterPro" id="IPR037062">
    <property type="entry name" value="Malic_N_dom_sf"/>
</dbReference>
<dbReference type="InterPro" id="IPR012302">
    <property type="entry name" value="Malic_NAD-bd"/>
</dbReference>
<dbReference type="InterPro" id="IPR001891">
    <property type="entry name" value="Malic_OxRdtase"/>
</dbReference>
<dbReference type="InterPro" id="IPR036291">
    <property type="entry name" value="NAD(P)-bd_dom_sf"/>
</dbReference>
<dbReference type="InterPro" id="IPR023667">
    <property type="entry name" value="NAD_malic_enz_proteobac"/>
</dbReference>
<dbReference type="NCBIfam" id="NF010052">
    <property type="entry name" value="PRK13529.1"/>
    <property type="match status" value="1"/>
</dbReference>
<dbReference type="PANTHER" id="PTHR23406">
    <property type="entry name" value="MALIC ENZYME-RELATED"/>
    <property type="match status" value="1"/>
</dbReference>
<dbReference type="PANTHER" id="PTHR23406:SF34">
    <property type="entry name" value="NAD-DEPENDENT MALIC ENZYME, MITOCHONDRIAL"/>
    <property type="match status" value="1"/>
</dbReference>
<dbReference type="Pfam" id="PF00390">
    <property type="entry name" value="malic"/>
    <property type="match status" value="1"/>
</dbReference>
<dbReference type="Pfam" id="PF03949">
    <property type="entry name" value="Malic_M"/>
    <property type="match status" value="1"/>
</dbReference>
<dbReference type="PIRSF" id="PIRSF000106">
    <property type="entry name" value="ME"/>
    <property type="match status" value="1"/>
</dbReference>
<dbReference type="PRINTS" id="PR00072">
    <property type="entry name" value="MALOXRDTASE"/>
</dbReference>
<dbReference type="SMART" id="SM01274">
    <property type="entry name" value="malic"/>
    <property type="match status" value="1"/>
</dbReference>
<dbReference type="SMART" id="SM00919">
    <property type="entry name" value="Malic_M"/>
    <property type="match status" value="1"/>
</dbReference>
<dbReference type="SUPFAM" id="SSF53223">
    <property type="entry name" value="Aminoacid dehydrogenase-like, N-terminal domain"/>
    <property type="match status" value="1"/>
</dbReference>
<dbReference type="SUPFAM" id="SSF51735">
    <property type="entry name" value="NAD(P)-binding Rossmann-fold domains"/>
    <property type="match status" value="1"/>
</dbReference>
<dbReference type="PROSITE" id="PS00331">
    <property type="entry name" value="MALIC_ENZYMES"/>
    <property type="match status" value="1"/>
</dbReference>